<protein>
    <recommendedName>
        <fullName evidence="1">Bifunctional protein GlmU</fullName>
    </recommendedName>
    <domain>
        <recommendedName>
            <fullName evidence="1">UDP-N-acetylglucosamine pyrophosphorylase</fullName>
            <ecNumber evidence="1">2.7.7.23</ecNumber>
        </recommendedName>
        <alternativeName>
            <fullName evidence="1">N-acetylglucosamine-1-phosphate uridyltransferase</fullName>
        </alternativeName>
    </domain>
    <domain>
        <recommendedName>
            <fullName evidence="1">Glucosamine-1-phosphate N-acetyltransferase</fullName>
            <ecNumber evidence="1">2.3.1.157</ecNumber>
        </recommendedName>
    </domain>
</protein>
<proteinExistence type="inferred from homology"/>
<comment type="function">
    <text evidence="1">Catalyzes the last two sequential reactions in the de novo biosynthetic pathway for UDP-N-acetylglucosamine (UDP-GlcNAc). The C-terminal domain catalyzes the transfer of acetyl group from acetyl coenzyme A to glucosamine-1-phosphate (GlcN-1-P) to produce N-acetylglucosamine-1-phosphate (GlcNAc-1-P), which is converted into UDP-GlcNAc by the transfer of uridine 5-monophosphate (from uridine 5-triphosphate), a reaction catalyzed by the N-terminal domain.</text>
</comment>
<comment type="catalytic activity">
    <reaction evidence="1">
        <text>alpha-D-glucosamine 1-phosphate + acetyl-CoA = N-acetyl-alpha-D-glucosamine 1-phosphate + CoA + H(+)</text>
        <dbReference type="Rhea" id="RHEA:13725"/>
        <dbReference type="ChEBI" id="CHEBI:15378"/>
        <dbReference type="ChEBI" id="CHEBI:57287"/>
        <dbReference type="ChEBI" id="CHEBI:57288"/>
        <dbReference type="ChEBI" id="CHEBI:57776"/>
        <dbReference type="ChEBI" id="CHEBI:58516"/>
        <dbReference type="EC" id="2.3.1.157"/>
    </reaction>
</comment>
<comment type="catalytic activity">
    <reaction evidence="1">
        <text>N-acetyl-alpha-D-glucosamine 1-phosphate + UTP + H(+) = UDP-N-acetyl-alpha-D-glucosamine + diphosphate</text>
        <dbReference type="Rhea" id="RHEA:13509"/>
        <dbReference type="ChEBI" id="CHEBI:15378"/>
        <dbReference type="ChEBI" id="CHEBI:33019"/>
        <dbReference type="ChEBI" id="CHEBI:46398"/>
        <dbReference type="ChEBI" id="CHEBI:57705"/>
        <dbReference type="ChEBI" id="CHEBI:57776"/>
        <dbReference type="EC" id="2.7.7.23"/>
    </reaction>
</comment>
<comment type="cofactor">
    <cofactor evidence="1">
        <name>Mg(2+)</name>
        <dbReference type="ChEBI" id="CHEBI:18420"/>
    </cofactor>
    <text evidence="1">Binds 1 Mg(2+) ion per subunit.</text>
</comment>
<comment type="pathway">
    <text evidence="1">Nucleotide-sugar biosynthesis; UDP-N-acetyl-alpha-D-glucosamine biosynthesis; N-acetyl-alpha-D-glucosamine 1-phosphate from alpha-D-glucosamine 6-phosphate (route II): step 2/2.</text>
</comment>
<comment type="pathway">
    <text evidence="1">Nucleotide-sugar biosynthesis; UDP-N-acetyl-alpha-D-glucosamine biosynthesis; UDP-N-acetyl-alpha-D-glucosamine from N-acetyl-alpha-D-glucosamine 1-phosphate: step 1/1.</text>
</comment>
<comment type="pathway">
    <text evidence="1">Bacterial outer membrane biogenesis; LPS lipid A biosynthesis.</text>
</comment>
<comment type="subunit">
    <text evidence="1">Homotrimer.</text>
</comment>
<comment type="subcellular location">
    <subcellularLocation>
        <location evidence="1">Cytoplasm</location>
    </subcellularLocation>
</comment>
<comment type="similarity">
    <text evidence="1">In the N-terminal section; belongs to the N-acetylglucosamine-1-phosphate uridyltransferase family.</text>
</comment>
<comment type="similarity">
    <text evidence="1">In the C-terminal section; belongs to the transferase hexapeptide repeat family.</text>
</comment>
<name>GLMU_CAMJE</name>
<evidence type="ECO:0000255" key="1">
    <source>
        <dbReference type="HAMAP-Rule" id="MF_01631"/>
    </source>
</evidence>
<dbReference type="EC" id="2.7.7.23" evidence="1"/>
<dbReference type="EC" id="2.3.1.157" evidence="1"/>
<dbReference type="EMBL" id="AL111168">
    <property type="protein sequence ID" value="CAL34949.1"/>
    <property type="molecule type" value="Genomic_DNA"/>
</dbReference>
<dbReference type="PIR" id="E81354">
    <property type="entry name" value="E81354"/>
</dbReference>
<dbReference type="RefSeq" id="WP_002852530.1">
    <property type="nucleotide sequence ID" value="NZ_SZUC01000001.1"/>
</dbReference>
<dbReference type="RefSeq" id="YP_002344228.1">
    <property type="nucleotide sequence ID" value="NC_002163.1"/>
</dbReference>
<dbReference type="SMR" id="Q9PPA2"/>
<dbReference type="IntAct" id="Q9PPA2">
    <property type="interactions" value="28"/>
</dbReference>
<dbReference type="STRING" id="192222.Cj0821"/>
<dbReference type="PaxDb" id="192222-Cj0821"/>
<dbReference type="EnsemblBacteria" id="CAL34949">
    <property type="protein sequence ID" value="CAL34949"/>
    <property type="gene ID" value="Cj0821"/>
</dbReference>
<dbReference type="GeneID" id="905125"/>
<dbReference type="KEGG" id="cje:Cj0821"/>
<dbReference type="PATRIC" id="fig|192222.6.peg.809"/>
<dbReference type="eggNOG" id="COG1207">
    <property type="taxonomic scope" value="Bacteria"/>
</dbReference>
<dbReference type="HOGENOM" id="CLU_029499_15_2_7"/>
<dbReference type="OrthoDB" id="9775031at2"/>
<dbReference type="BioCyc" id="MetaCyc:MONOMER-16346"/>
<dbReference type="UniPathway" id="UPA00113">
    <property type="reaction ID" value="UER00532"/>
</dbReference>
<dbReference type="UniPathway" id="UPA00113">
    <property type="reaction ID" value="UER00533"/>
</dbReference>
<dbReference type="UniPathway" id="UPA00973"/>
<dbReference type="Proteomes" id="UP000000799">
    <property type="component" value="Chromosome"/>
</dbReference>
<dbReference type="GO" id="GO:0005737">
    <property type="term" value="C:cytoplasm"/>
    <property type="evidence" value="ECO:0007669"/>
    <property type="project" value="UniProtKB-SubCell"/>
</dbReference>
<dbReference type="GO" id="GO:0016020">
    <property type="term" value="C:membrane"/>
    <property type="evidence" value="ECO:0007669"/>
    <property type="project" value="GOC"/>
</dbReference>
<dbReference type="GO" id="GO:0019134">
    <property type="term" value="F:glucosamine-1-phosphate N-acetyltransferase activity"/>
    <property type="evidence" value="ECO:0007669"/>
    <property type="project" value="UniProtKB-UniRule"/>
</dbReference>
<dbReference type="GO" id="GO:0000287">
    <property type="term" value="F:magnesium ion binding"/>
    <property type="evidence" value="ECO:0007669"/>
    <property type="project" value="UniProtKB-UniRule"/>
</dbReference>
<dbReference type="GO" id="GO:0003977">
    <property type="term" value="F:UDP-N-acetylglucosamine diphosphorylase activity"/>
    <property type="evidence" value="ECO:0007669"/>
    <property type="project" value="UniProtKB-UniRule"/>
</dbReference>
<dbReference type="GO" id="GO:0000902">
    <property type="term" value="P:cell morphogenesis"/>
    <property type="evidence" value="ECO:0007669"/>
    <property type="project" value="UniProtKB-UniRule"/>
</dbReference>
<dbReference type="GO" id="GO:0071555">
    <property type="term" value="P:cell wall organization"/>
    <property type="evidence" value="ECO:0007669"/>
    <property type="project" value="UniProtKB-KW"/>
</dbReference>
<dbReference type="GO" id="GO:0009245">
    <property type="term" value="P:lipid A biosynthetic process"/>
    <property type="evidence" value="ECO:0007669"/>
    <property type="project" value="UniProtKB-UniRule"/>
</dbReference>
<dbReference type="GO" id="GO:0009252">
    <property type="term" value="P:peptidoglycan biosynthetic process"/>
    <property type="evidence" value="ECO:0007669"/>
    <property type="project" value="UniProtKB-UniRule"/>
</dbReference>
<dbReference type="GO" id="GO:0008360">
    <property type="term" value="P:regulation of cell shape"/>
    <property type="evidence" value="ECO:0007669"/>
    <property type="project" value="UniProtKB-KW"/>
</dbReference>
<dbReference type="GO" id="GO:0006048">
    <property type="term" value="P:UDP-N-acetylglucosamine biosynthetic process"/>
    <property type="evidence" value="ECO:0007669"/>
    <property type="project" value="UniProtKB-UniPathway"/>
</dbReference>
<dbReference type="CDD" id="cd02540">
    <property type="entry name" value="GT2_GlmU_N_bac"/>
    <property type="match status" value="1"/>
</dbReference>
<dbReference type="Gene3D" id="2.160.10.10">
    <property type="entry name" value="Hexapeptide repeat proteins"/>
    <property type="match status" value="1"/>
</dbReference>
<dbReference type="Gene3D" id="3.90.550.10">
    <property type="entry name" value="Spore Coat Polysaccharide Biosynthesis Protein SpsA, Chain A"/>
    <property type="match status" value="1"/>
</dbReference>
<dbReference type="HAMAP" id="MF_01631">
    <property type="entry name" value="GlmU"/>
    <property type="match status" value="1"/>
</dbReference>
<dbReference type="InterPro" id="IPR005882">
    <property type="entry name" value="Bifunctional_GlmU"/>
</dbReference>
<dbReference type="InterPro" id="IPR050065">
    <property type="entry name" value="GlmU-like"/>
</dbReference>
<dbReference type="InterPro" id="IPR001451">
    <property type="entry name" value="Hexapep"/>
</dbReference>
<dbReference type="InterPro" id="IPR025877">
    <property type="entry name" value="MobA-like_NTP_Trfase"/>
</dbReference>
<dbReference type="InterPro" id="IPR029044">
    <property type="entry name" value="Nucleotide-diphossugar_trans"/>
</dbReference>
<dbReference type="InterPro" id="IPR011004">
    <property type="entry name" value="Trimer_LpxA-like_sf"/>
</dbReference>
<dbReference type="NCBIfam" id="TIGR01173">
    <property type="entry name" value="glmU"/>
    <property type="match status" value="1"/>
</dbReference>
<dbReference type="NCBIfam" id="NF010939">
    <property type="entry name" value="PRK14359.1"/>
    <property type="match status" value="1"/>
</dbReference>
<dbReference type="PANTHER" id="PTHR43584:SF3">
    <property type="entry name" value="BIFUNCTIONAL PROTEIN GLMU"/>
    <property type="match status" value="1"/>
</dbReference>
<dbReference type="PANTHER" id="PTHR43584">
    <property type="entry name" value="NUCLEOTIDYL TRANSFERASE"/>
    <property type="match status" value="1"/>
</dbReference>
<dbReference type="Pfam" id="PF00132">
    <property type="entry name" value="Hexapep"/>
    <property type="match status" value="1"/>
</dbReference>
<dbReference type="Pfam" id="PF12804">
    <property type="entry name" value="NTP_transf_3"/>
    <property type="match status" value="1"/>
</dbReference>
<dbReference type="SUPFAM" id="SSF53448">
    <property type="entry name" value="Nucleotide-diphospho-sugar transferases"/>
    <property type="match status" value="1"/>
</dbReference>
<dbReference type="SUPFAM" id="SSF51161">
    <property type="entry name" value="Trimeric LpxA-like enzymes"/>
    <property type="match status" value="1"/>
</dbReference>
<reference key="1">
    <citation type="journal article" date="2000" name="Nature">
        <title>The genome sequence of the food-borne pathogen Campylobacter jejuni reveals hypervariable sequences.</title>
        <authorList>
            <person name="Parkhill J."/>
            <person name="Wren B.W."/>
            <person name="Mungall K.L."/>
            <person name="Ketley J.M."/>
            <person name="Churcher C.M."/>
            <person name="Basham D."/>
            <person name="Chillingworth T."/>
            <person name="Davies R.M."/>
            <person name="Feltwell T."/>
            <person name="Holroyd S."/>
            <person name="Jagels K."/>
            <person name="Karlyshev A.V."/>
            <person name="Moule S."/>
            <person name="Pallen M.J."/>
            <person name="Penn C.W."/>
            <person name="Quail M.A."/>
            <person name="Rajandream M.A."/>
            <person name="Rutherford K.M."/>
            <person name="van Vliet A.H.M."/>
            <person name="Whitehead S."/>
            <person name="Barrell B.G."/>
        </authorList>
    </citation>
    <scope>NUCLEOTIDE SEQUENCE [LARGE SCALE GENOMIC DNA]</scope>
    <source>
        <strain>ATCC 700819 / NCTC 11168</strain>
    </source>
</reference>
<organism>
    <name type="scientific">Campylobacter jejuni subsp. jejuni serotype O:2 (strain ATCC 700819 / NCTC 11168)</name>
    <dbReference type="NCBI Taxonomy" id="192222"/>
    <lineage>
        <taxon>Bacteria</taxon>
        <taxon>Pseudomonadati</taxon>
        <taxon>Campylobacterota</taxon>
        <taxon>Epsilonproteobacteria</taxon>
        <taxon>Campylobacterales</taxon>
        <taxon>Campylobacteraceae</taxon>
        <taxon>Campylobacter</taxon>
    </lineage>
</organism>
<keyword id="KW-0012">Acyltransferase</keyword>
<keyword id="KW-0133">Cell shape</keyword>
<keyword id="KW-0961">Cell wall biogenesis/degradation</keyword>
<keyword id="KW-0963">Cytoplasm</keyword>
<keyword id="KW-0460">Magnesium</keyword>
<keyword id="KW-0479">Metal-binding</keyword>
<keyword id="KW-0511">Multifunctional enzyme</keyword>
<keyword id="KW-0548">Nucleotidyltransferase</keyword>
<keyword id="KW-0573">Peptidoglycan synthesis</keyword>
<keyword id="KW-1185">Reference proteome</keyword>
<keyword id="KW-0677">Repeat</keyword>
<keyword id="KW-0808">Transferase</keyword>
<gene>
    <name evidence="1" type="primary">glmU</name>
    <name type="ordered locus">Cj0821</name>
</gene>
<accession>Q9PPA2</accession>
<accession>Q0PA69</accession>
<feature type="chain" id="PRO_0000233751" description="Bifunctional protein GlmU">
    <location>
        <begin position="1"/>
        <end position="429"/>
    </location>
</feature>
<feature type="region of interest" description="Pyrophosphorylase" evidence="1">
    <location>
        <begin position="1"/>
        <end position="223"/>
    </location>
</feature>
<feature type="region of interest" description="Linker" evidence="1">
    <location>
        <begin position="224"/>
        <end position="244"/>
    </location>
</feature>
<feature type="region of interest" description="N-acetyltransferase" evidence="1">
    <location>
        <begin position="245"/>
        <end position="429"/>
    </location>
</feature>
<feature type="active site" description="Proton acceptor" evidence="1">
    <location>
        <position position="336"/>
    </location>
</feature>
<feature type="binding site" evidence="1">
    <location>
        <begin position="8"/>
        <end position="11"/>
    </location>
    <ligand>
        <name>UDP-N-acetyl-alpha-D-glucosamine</name>
        <dbReference type="ChEBI" id="CHEBI:57705"/>
    </ligand>
</feature>
<feature type="binding site" evidence="1">
    <location>
        <position position="22"/>
    </location>
    <ligand>
        <name>UDP-N-acetyl-alpha-D-glucosamine</name>
        <dbReference type="ChEBI" id="CHEBI:57705"/>
    </ligand>
</feature>
<feature type="binding site" evidence="1">
    <location>
        <begin position="81"/>
        <end position="82"/>
    </location>
    <ligand>
        <name>UDP-N-acetyl-alpha-D-glucosamine</name>
        <dbReference type="ChEBI" id="CHEBI:57705"/>
    </ligand>
</feature>
<feature type="binding site" evidence="1">
    <location>
        <position position="102"/>
    </location>
    <ligand>
        <name>Mg(2+)</name>
        <dbReference type="ChEBI" id="CHEBI:18420"/>
    </ligand>
</feature>
<feature type="binding site" evidence="1">
    <location>
        <position position="135"/>
    </location>
    <ligand>
        <name>UDP-N-acetyl-alpha-D-glucosamine</name>
        <dbReference type="ChEBI" id="CHEBI:57705"/>
    </ligand>
</feature>
<feature type="binding site" evidence="1">
    <location>
        <position position="149"/>
    </location>
    <ligand>
        <name>UDP-N-acetyl-alpha-D-glucosamine</name>
        <dbReference type="ChEBI" id="CHEBI:57705"/>
    </ligand>
</feature>
<feature type="binding site" evidence="1">
    <location>
        <position position="164"/>
    </location>
    <ligand>
        <name>UDP-N-acetyl-alpha-D-glucosamine</name>
        <dbReference type="ChEBI" id="CHEBI:57705"/>
    </ligand>
</feature>
<feature type="binding site" evidence="1">
    <location>
        <position position="221"/>
    </location>
    <ligand>
        <name>Mg(2+)</name>
        <dbReference type="ChEBI" id="CHEBI:18420"/>
    </ligand>
</feature>
<feature type="binding site" evidence="1">
    <location>
        <position position="221"/>
    </location>
    <ligand>
        <name>UDP-N-acetyl-alpha-D-glucosamine</name>
        <dbReference type="ChEBI" id="CHEBI:57705"/>
    </ligand>
</feature>
<feature type="binding site" evidence="1">
    <location>
        <position position="308"/>
    </location>
    <ligand>
        <name>UDP-N-acetyl-alpha-D-glucosamine</name>
        <dbReference type="ChEBI" id="CHEBI:57705"/>
    </ligand>
</feature>
<feature type="binding site" evidence="1">
    <location>
        <position position="325"/>
    </location>
    <ligand>
        <name>UDP-N-acetyl-alpha-D-glucosamine</name>
        <dbReference type="ChEBI" id="CHEBI:57705"/>
    </ligand>
</feature>
<feature type="binding site" evidence="1">
    <location>
        <position position="339"/>
    </location>
    <ligand>
        <name>UDP-N-acetyl-alpha-D-glucosamine</name>
        <dbReference type="ChEBI" id="CHEBI:57705"/>
    </ligand>
</feature>
<feature type="binding site" evidence="1">
    <location>
        <position position="350"/>
    </location>
    <ligand>
        <name>UDP-N-acetyl-alpha-D-glucosamine</name>
        <dbReference type="ChEBI" id="CHEBI:57705"/>
    </ligand>
</feature>
<feature type="binding site" evidence="1">
    <location>
        <begin position="359"/>
        <end position="360"/>
    </location>
    <ligand>
        <name>acetyl-CoA</name>
        <dbReference type="ChEBI" id="CHEBI:57288"/>
    </ligand>
</feature>
<feature type="binding site" evidence="1">
    <location>
        <position position="378"/>
    </location>
    <ligand>
        <name>acetyl-CoA</name>
        <dbReference type="ChEBI" id="CHEBI:57288"/>
    </ligand>
</feature>
<feature type="binding site" evidence="1">
    <location>
        <position position="396"/>
    </location>
    <ligand>
        <name>acetyl-CoA</name>
        <dbReference type="ChEBI" id="CHEBI:57288"/>
    </ligand>
</feature>
<feature type="binding site" evidence="1">
    <location>
        <position position="413"/>
    </location>
    <ligand>
        <name>acetyl-CoA</name>
        <dbReference type="ChEBI" id="CHEBI:57288"/>
    </ligand>
</feature>
<sequence length="429" mass="47906">MKTSILILAAGLGTRIKSQKPKVLQELCQKSMILHILKKAFALSDDVSVVLSHQKERVEKEILEYFPKTQILEQDLQNYPGTAGALSGFEPKNERVLILCGDMPLVEQTSLEALLGNNAKLNLAVFKARDPKSYGRVVIKNDSVEKIVEFKDANTQEKEINTCNAGVYVIDSRLLKELLPLIDNNNAAKEYYLTDIVKLAKEKDVMIKAVFVDEDEFMGINDKFELSIAENFMQKKIKKYWMQQGVIFHLPQSTFIGADVEFVGECEVYENVRIEGKSKIINSIIKSSSVIENSIVENSDVGPLAHLRPNCELKNTHIGNFVECKNAKLNTVKAGHLSYLGDCEIDSGTNIGCGTITCNYDGVKKHKTIIGKNVFVGSDTQFIAPVKIEDEVIIAAGSTVSINVEKGALFINRAGHKMIKDYYYKKFQK</sequence>